<feature type="chain" id="PRO_0000333281" description="Ankyrin repeat and ELMO domain-containing protein D">
    <location>
        <begin position="1"/>
        <end position="1267"/>
    </location>
</feature>
<feature type="domain" description="ELMO" evidence="1">
    <location>
        <begin position="307"/>
        <end position="466"/>
    </location>
</feature>
<feature type="repeat" description="ANK 1">
    <location>
        <begin position="655"/>
        <end position="685"/>
    </location>
</feature>
<feature type="repeat" description="ANK 2">
    <location>
        <begin position="689"/>
        <end position="718"/>
    </location>
</feature>
<feature type="repeat" description="ANK 3">
    <location>
        <begin position="767"/>
        <end position="796"/>
    </location>
</feature>
<feature type="repeat" description="ANK 4">
    <location>
        <begin position="801"/>
        <end position="830"/>
    </location>
</feature>
<feature type="region of interest" description="Disordered" evidence="2">
    <location>
        <begin position="486"/>
        <end position="598"/>
    </location>
</feature>
<feature type="region of interest" description="Disordered" evidence="2">
    <location>
        <begin position="854"/>
        <end position="908"/>
    </location>
</feature>
<feature type="region of interest" description="Disordered" evidence="2">
    <location>
        <begin position="924"/>
        <end position="1040"/>
    </location>
</feature>
<feature type="region of interest" description="Disordered" evidence="2">
    <location>
        <begin position="1057"/>
        <end position="1082"/>
    </location>
</feature>
<feature type="region of interest" description="Disordered" evidence="2">
    <location>
        <begin position="1103"/>
        <end position="1215"/>
    </location>
</feature>
<feature type="compositionally biased region" description="Basic and acidic residues" evidence="2">
    <location>
        <begin position="486"/>
        <end position="496"/>
    </location>
</feature>
<feature type="compositionally biased region" description="Low complexity" evidence="2">
    <location>
        <begin position="507"/>
        <end position="598"/>
    </location>
</feature>
<feature type="compositionally biased region" description="Low complexity" evidence="2">
    <location>
        <begin position="859"/>
        <end position="870"/>
    </location>
</feature>
<feature type="compositionally biased region" description="Low complexity" evidence="2">
    <location>
        <begin position="895"/>
        <end position="908"/>
    </location>
</feature>
<feature type="compositionally biased region" description="Low complexity" evidence="2">
    <location>
        <begin position="924"/>
        <end position="1033"/>
    </location>
</feature>
<feature type="compositionally biased region" description="Polar residues" evidence="2">
    <location>
        <begin position="1057"/>
        <end position="1080"/>
    </location>
</feature>
<feature type="compositionally biased region" description="Low complexity" evidence="2">
    <location>
        <begin position="1108"/>
        <end position="1176"/>
    </location>
</feature>
<feature type="compositionally biased region" description="Low complexity" evidence="2">
    <location>
        <begin position="1184"/>
        <end position="1213"/>
    </location>
</feature>
<reference key="1">
    <citation type="journal article" date="2005" name="Nature">
        <title>The genome of the social amoeba Dictyostelium discoideum.</title>
        <authorList>
            <person name="Eichinger L."/>
            <person name="Pachebat J.A."/>
            <person name="Gloeckner G."/>
            <person name="Rajandream M.A."/>
            <person name="Sucgang R."/>
            <person name="Berriman M."/>
            <person name="Song J."/>
            <person name="Olsen R."/>
            <person name="Szafranski K."/>
            <person name="Xu Q."/>
            <person name="Tunggal B."/>
            <person name="Kummerfeld S."/>
            <person name="Madera M."/>
            <person name="Konfortov B.A."/>
            <person name="Rivero F."/>
            <person name="Bankier A.T."/>
            <person name="Lehmann R."/>
            <person name="Hamlin N."/>
            <person name="Davies R."/>
            <person name="Gaudet P."/>
            <person name="Fey P."/>
            <person name="Pilcher K."/>
            <person name="Chen G."/>
            <person name="Saunders D."/>
            <person name="Sodergren E.J."/>
            <person name="Davis P."/>
            <person name="Kerhornou A."/>
            <person name="Nie X."/>
            <person name="Hall N."/>
            <person name="Anjard C."/>
            <person name="Hemphill L."/>
            <person name="Bason N."/>
            <person name="Farbrother P."/>
            <person name="Desany B."/>
            <person name="Just E."/>
            <person name="Morio T."/>
            <person name="Rost R."/>
            <person name="Churcher C.M."/>
            <person name="Cooper J."/>
            <person name="Haydock S."/>
            <person name="van Driessche N."/>
            <person name="Cronin A."/>
            <person name="Goodhead I."/>
            <person name="Muzny D.M."/>
            <person name="Mourier T."/>
            <person name="Pain A."/>
            <person name="Lu M."/>
            <person name="Harper D."/>
            <person name="Lindsay R."/>
            <person name="Hauser H."/>
            <person name="James K.D."/>
            <person name="Quiles M."/>
            <person name="Madan Babu M."/>
            <person name="Saito T."/>
            <person name="Buchrieser C."/>
            <person name="Wardroper A."/>
            <person name="Felder M."/>
            <person name="Thangavelu M."/>
            <person name="Johnson D."/>
            <person name="Knights A."/>
            <person name="Loulseged H."/>
            <person name="Mungall K.L."/>
            <person name="Oliver K."/>
            <person name="Price C."/>
            <person name="Quail M.A."/>
            <person name="Urushihara H."/>
            <person name="Hernandez J."/>
            <person name="Rabbinowitsch E."/>
            <person name="Steffen D."/>
            <person name="Sanders M."/>
            <person name="Ma J."/>
            <person name="Kohara Y."/>
            <person name="Sharp S."/>
            <person name="Simmonds M.N."/>
            <person name="Spiegler S."/>
            <person name="Tivey A."/>
            <person name="Sugano S."/>
            <person name="White B."/>
            <person name="Walker D."/>
            <person name="Woodward J.R."/>
            <person name="Winckler T."/>
            <person name="Tanaka Y."/>
            <person name="Shaulsky G."/>
            <person name="Schleicher M."/>
            <person name="Weinstock G.M."/>
            <person name="Rosenthal A."/>
            <person name="Cox E.C."/>
            <person name="Chisholm R.L."/>
            <person name="Gibbs R.A."/>
            <person name="Loomis W.F."/>
            <person name="Platzer M."/>
            <person name="Kay R.R."/>
            <person name="Williams J.G."/>
            <person name="Dear P.H."/>
            <person name="Noegel A.A."/>
            <person name="Barrell B.G."/>
            <person name="Kuspa A."/>
        </authorList>
    </citation>
    <scope>NUCLEOTIDE SEQUENCE [LARGE SCALE GENOMIC DNA]</scope>
    <source>
        <strain>AX4</strain>
    </source>
</reference>
<dbReference type="EMBL" id="AAFI02000039">
    <property type="protein sequence ID" value="EAL67013.1"/>
    <property type="molecule type" value="Genomic_DNA"/>
</dbReference>
<dbReference type="RefSeq" id="XP_640972.1">
    <property type="nucleotide sequence ID" value="XM_635880.1"/>
</dbReference>
<dbReference type="SMR" id="Q54UP9"/>
<dbReference type="FunCoup" id="Q54UP9">
    <property type="interactions" value="319"/>
</dbReference>
<dbReference type="STRING" id="44689.Q54UP9"/>
<dbReference type="GlyGen" id="Q54UP9">
    <property type="glycosylation" value="1 site"/>
</dbReference>
<dbReference type="PaxDb" id="44689-DDB0233923"/>
<dbReference type="EnsemblProtists" id="EAL67013">
    <property type="protein sequence ID" value="EAL67013"/>
    <property type="gene ID" value="DDB_G0280943"/>
</dbReference>
<dbReference type="GeneID" id="8622776"/>
<dbReference type="KEGG" id="ddi:DDB_G0280943"/>
<dbReference type="dictyBase" id="DDB_G0280943">
    <property type="gene designation" value="elmoD"/>
</dbReference>
<dbReference type="VEuPathDB" id="AmoebaDB:DDB_G0280943"/>
<dbReference type="eggNOG" id="KOG2998">
    <property type="taxonomic scope" value="Eukaryota"/>
</dbReference>
<dbReference type="HOGENOM" id="CLU_264313_0_0_1"/>
<dbReference type="InParanoid" id="Q54UP9"/>
<dbReference type="OMA" id="TAFRKQI"/>
<dbReference type="PRO" id="PR:Q54UP9"/>
<dbReference type="Proteomes" id="UP000002195">
    <property type="component" value="Chromosome 3"/>
</dbReference>
<dbReference type="GO" id="GO:0005886">
    <property type="term" value="C:plasma membrane"/>
    <property type="evidence" value="ECO:0000318"/>
    <property type="project" value="GO_Central"/>
</dbReference>
<dbReference type="GO" id="GO:0007015">
    <property type="term" value="P:actin filament organization"/>
    <property type="evidence" value="ECO:0000318"/>
    <property type="project" value="GO_Central"/>
</dbReference>
<dbReference type="GO" id="GO:0048870">
    <property type="term" value="P:cell motility"/>
    <property type="evidence" value="ECO:0000318"/>
    <property type="project" value="GO_Central"/>
</dbReference>
<dbReference type="Gene3D" id="1.25.40.20">
    <property type="entry name" value="Ankyrin repeat-containing domain"/>
    <property type="match status" value="1"/>
</dbReference>
<dbReference type="InterPro" id="IPR002110">
    <property type="entry name" value="Ankyrin_rpt"/>
</dbReference>
<dbReference type="InterPro" id="IPR036770">
    <property type="entry name" value="Ankyrin_rpt-contain_sf"/>
</dbReference>
<dbReference type="InterPro" id="IPR024574">
    <property type="entry name" value="ELMO_ARM"/>
</dbReference>
<dbReference type="InterPro" id="IPR006816">
    <property type="entry name" value="ELMO_dom"/>
</dbReference>
<dbReference type="InterPro" id="IPR050868">
    <property type="entry name" value="ELMO_domain-containing"/>
</dbReference>
<dbReference type="PANTHER" id="PTHR12771:SF27">
    <property type="entry name" value="ANKYRIN REPEAT AND ELMO DOMAIN-CONTAINING PROTEIN D"/>
    <property type="match status" value="1"/>
</dbReference>
<dbReference type="PANTHER" id="PTHR12771">
    <property type="entry name" value="ENGULFMENT AND CELL MOTILITY"/>
    <property type="match status" value="1"/>
</dbReference>
<dbReference type="Pfam" id="PF12796">
    <property type="entry name" value="Ank_2"/>
    <property type="match status" value="1"/>
</dbReference>
<dbReference type="Pfam" id="PF11841">
    <property type="entry name" value="ELMO_ARM"/>
    <property type="match status" value="1"/>
</dbReference>
<dbReference type="Pfam" id="PF04727">
    <property type="entry name" value="ELMO_CED12"/>
    <property type="match status" value="1"/>
</dbReference>
<dbReference type="SMART" id="SM00248">
    <property type="entry name" value="ANK"/>
    <property type="match status" value="4"/>
</dbReference>
<dbReference type="SUPFAM" id="SSF48403">
    <property type="entry name" value="Ankyrin repeat"/>
    <property type="match status" value="1"/>
</dbReference>
<dbReference type="PROSITE" id="PS50297">
    <property type="entry name" value="ANK_REP_REGION"/>
    <property type="match status" value="1"/>
</dbReference>
<dbReference type="PROSITE" id="PS50088">
    <property type="entry name" value="ANK_REPEAT"/>
    <property type="match status" value="1"/>
</dbReference>
<dbReference type="PROSITE" id="PS51335">
    <property type="entry name" value="ELMO"/>
    <property type="match status" value="1"/>
</dbReference>
<proteinExistence type="predicted"/>
<keyword id="KW-0040">ANK repeat</keyword>
<keyword id="KW-1185">Reference proteome</keyword>
<keyword id="KW-0677">Repeat</keyword>
<gene>
    <name type="primary">elmoD</name>
    <name type="ORF">DDB_G0280943</name>
</gene>
<protein>
    <recommendedName>
        <fullName>Ankyrin repeat and ELMO domain-containing protein D</fullName>
    </recommendedName>
</protein>
<name>ELMOD_DICDI</name>
<organism>
    <name type="scientific">Dictyostelium discoideum</name>
    <name type="common">Social amoeba</name>
    <dbReference type="NCBI Taxonomy" id="44689"/>
    <lineage>
        <taxon>Eukaryota</taxon>
        <taxon>Amoebozoa</taxon>
        <taxon>Evosea</taxon>
        <taxon>Eumycetozoa</taxon>
        <taxon>Dictyostelia</taxon>
        <taxon>Dictyosteliales</taxon>
        <taxon>Dictyosteliaceae</taxon>
        <taxon>Dictyostelium</taxon>
    </lineage>
</organism>
<evidence type="ECO:0000255" key="1">
    <source>
        <dbReference type="PROSITE-ProRule" id="PRU00664"/>
    </source>
</evidence>
<evidence type="ECO:0000256" key="2">
    <source>
        <dbReference type="SAM" id="MobiDB-lite"/>
    </source>
</evidence>
<accession>Q54UP9</accession>
<sequence>MTHTIRVLIKYQNSMIDHFIIKGVKLSTQIDMFCQIFKIQEDPIKYSLLVEDLGVYLTDDAIFHENSTYININNKVLELQLGTSYQVSSVLKTMSSCKDLKKSLVLLKSHLTKNFCAEFIKKGGLEHLQAIIKSESASANTLSVAFGILEILSVYPDFSWDYISQPVIDKVVSNFGYINVNPSLKLGIKLATDRKGYTMLQNSIDKTFDTTTGDNCVYSKIVNGNLSSTDINTQTSTLNLINNMVSFSQSPIEFLKNLESYNISSTLKSQLSATDTAFRKQIYLFQCHKIQGLIMDSKTPYNKDEPSHQRLLETLWSTLFPNQVFQRSHENWQIIGFQNKDPSSDFRGMGLAGLKHLIYLAQNHKDMFMNPLINRQPEANYYPYATSGIQVTSFLVECVKPINISANHSDVIGQIYPILFESENALNEIYCVLMEIFGIVWKDWNATYMIFQKVFQFVSGLASEVLPKCKCVVDFKSLIIEKLENKKKEKKSEKRGSVSTRHSKQFGSNGNINSTTTTTTTTTTTTTPISTTGSGSSNSLNGNTSNNNNNNNISMSYSSNNGSTLSGLGNNHSSNNNNNNNNNNNNNNNNHILNNNHLYVNNTNSNSSGNNMISCSPSGSSISGSGSISIHNSQSMNSKTFIEDIDIDACTVSPDGNSPLHSAIMNSMTLDCITNGININLFLNTTNNQGLTPLNLACSISPYLIIDFFLQQDTDPFIPAKNGEYPFHNFCSRKWTFNEFTRGCSLFLAKSNHHQYHDIVNQTNHVTLETPLSTAIQSGNEDSVGHLLTLCPNINNYFNSSGQNALHIAISKRNLHIITCLIQNGADPSIPNEITKETCEDICASDPEIMIILNPTKLSRSTSSTSSSTSRIHDESNNNGSIKKNPIPLPKRPQITNNNSIQYSNSTSSNSLINNNNFNNLLSTSINNSYNNNNNNNNNNNNNNNNNNNNNNNNNNNNPNNNNNNNNNNNPNNNSNNNNNNNNNNNNNNNNSTLNVNNNNNSNNNHQYVNSPYNSNKSSISSPNHNNTPSTSPGITSPIFRSATPLKQTMSVGLMHSPTQESPQVISTPTSPPYLSNNNGAERVYGRSGSGFFNNINGMFNQENLTKNSGNNNNNNSSSSGGSSSSNSNGINNNNNNNINNNNNNNNNNNNNNNNNGSIGNSGNYNHMNNINIGSHHSNHHSNHNGPINNGNYPNYRGNNITTSPVGVTVTPPKDQKKADSVVNVRRLLNESLCLVDLICSGPEKQKENVKKLNEALKSCLKNVKNF</sequence>